<name>UBIA_SALTY</name>
<accession>Q7CPB4</accession>
<proteinExistence type="evidence at protein level"/>
<evidence type="ECO:0000255" key="1">
    <source>
        <dbReference type="HAMAP-Rule" id="MF_01635"/>
    </source>
</evidence>
<evidence type="ECO:0000269" key="2">
    <source>
    </source>
</evidence>
<sequence>MEWSLTQSKLLAFHRLMRTDKPIGALLLLWPTLWALWVATPGMPQLWILAVFVAGVWLMRAAGCVVNDYADRKFDGHVKRTVNRPLPSGAVTEKEARNLFVVLVLLAFLLVLTLNAMTILLSVAALALAWVYPFMKRYTHLPQVVLGAAFGWSIPMAFAAVSESLPLSCWLMFLANILWAVAYDTQYAMVDRDDDIKIGIKSTAILFGRYDTLIIGILQLGVMALMALIGWLNGLGWGYYWAVLVAGALFVYQQKLIANREREACFKAFMNNNYVGLVLFLGLAMSYWHF</sequence>
<gene>
    <name evidence="1" type="primary">ubiA</name>
    <name type="ordered locus">STM4234</name>
</gene>
<protein>
    <recommendedName>
        <fullName evidence="1">4-hydroxybenzoate octaprenyltransferase</fullName>
        <ecNumber evidence="1">2.5.1.39</ecNumber>
    </recommendedName>
    <alternativeName>
        <fullName evidence="1">4-HB polyprenyltransferase</fullName>
    </alternativeName>
</protein>
<keyword id="KW-0997">Cell inner membrane</keyword>
<keyword id="KW-1003">Cell membrane</keyword>
<keyword id="KW-0460">Magnesium</keyword>
<keyword id="KW-0472">Membrane</keyword>
<keyword id="KW-1185">Reference proteome</keyword>
<keyword id="KW-0808">Transferase</keyword>
<keyword id="KW-0812">Transmembrane</keyword>
<keyword id="KW-1133">Transmembrane helix</keyword>
<keyword id="KW-0831">Ubiquinone biosynthesis</keyword>
<organism>
    <name type="scientific">Salmonella typhimurium (strain LT2 / SGSC1412 / ATCC 700720)</name>
    <dbReference type="NCBI Taxonomy" id="99287"/>
    <lineage>
        <taxon>Bacteria</taxon>
        <taxon>Pseudomonadati</taxon>
        <taxon>Pseudomonadota</taxon>
        <taxon>Gammaproteobacteria</taxon>
        <taxon>Enterobacterales</taxon>
        <taxon>Enterobacteriaceae</taxon>
        <taxon>Salmonella</taxon>
    </lineage>
</organism>
<comment type="function">
    <text evidence="1">Catalyzes the prenylation of para-hydroxybenzoate (PHB) with an all-trans polyprenyl group. Mediates the second step in the final reaction sequence of ubiquinone-8 (UQ-8) biosynthesis, which is the condensation of the polyisoprenoid side chain with PHB, generating the first membrane-bound Q intermediate 3-octaprenyl-4-hydroxybenzoate.</text>
</comment>
<comment type="catalytic activity">
    <reaction evidence="1">
        <text>all-trans-octaprenyl diphosphate + 4-hydroxybenzoate = 4-hydroxy-3-(all-trans-octaprenyl)benzoate + diphosphate</text>
        <dbReference type="Rhea" id="RHEA:27782"/>
        <dbReference type="ChEBI" id="CHEBI:1617"/>
        <dbReference type="ChEBI" id="CHEBI:17879"/>
        <dbReference type="ChEBI" id="CHEBI:33019"/>
        <dbReference type="ChEBI" id="CHEBI:57711"/>
        <dbReference type="EC" id="2.5.1.39"/>
    </reaction>
</comment>
<comment type="cofactor">
    <cofactor evidence="1">
        <name>Mg(2+)</name>
        <dbReference type="ChEBI" id="CHEBI:18420"/>
    </cofactor>
</comment>
<comment type="pathway">
    <text evidence="1">Cofactor biosynthesis; ubiquinone biosynthesis.</text>
</comment>
<comment type="subcellular location">
    <subcellularLocation>
        <location evidence="1">Cell inner membrane</location>
        <topology evidence="1">Multi-pass membrane protein</topology>
    </subcellularLocation>
</comment>
<comment type="miscellaneous">
    <text evidence="2">A mutant in which deletion of the last 50 residues is combined with the 'Tyr-56' mutation in rsmG is highly resistant to streptomycin and has a small colony phenotype (which grow slowly and are resistant to aminoglycoside anitbiotics).</text>
</comment>
<comment type="similarity">
    <text evidence="1">Belongs to the UbiA prenyltransferase family.</text>
</comment>
<dbReference type="EC" id="2.5.1.39" evidence="1"/>
<dbReference type="EMBL" id="AE006468">
    <property type="protein sequence ID" value="AAL23058.1"/>
    <property type="molecule type" value="Genomic_DNA"/>
</dbReference>
<dbReference type="RefSeq" id="NP_463099.1">
    <property type="nucleotide sequence ID" value="NC_003197.2"/>
</dbReference>
<dbReference type="RefSeq" id="WP_000455249.1">
    <property type="nucleotide sequence ID" value="NC_003197.2"/>
</dbReference>
<dbReference type="SMR" id="Q7CPB4"/>
<dbReference type="STRING" id="99287.STM4234"/>
<dbReference type="PaxDb" id="99287-STM4234"/>
<dbReference type="GeneID" id="1255760"/>
<dbReference type="KEGG" id="stm:STM4234"/>
<dbReference type="PATRIC" id="fig|99287.12.peg.4454"/>
<dbReference type="HOGENOM" id="CLU_034879_1_0_6"/>
<dbReference type="OMA" id="KFEHTIF"/>
<dbReference type="PhylomeDB" id="Q7CPB4"/>
<dbReference type="BioCyc" id="SENT99287:STM4234-MONOMER"/>
<dbReference type="UniPathway" id="UPA00232"/>
<dbReference type="Proteomes" id="UP000001014">
    <property type="component" value="Chromosome"/>
</dbReference>
<dbReference type="GO" id="GO:0005886">
    <property type="term" value="C:plasma membrane"/>
    <property type="evidence" value="ECO:0000318"/>
    <property type="project" value="GO_Central"/>
</dbReference>
<dbReference type="GO" id="GO:0008412">
    <property type="term" value="F:4-hydroxybenzoate polyprenyltransferase activity"/>
    <property type="evidence" value="ECO:0000318"/>
    <property type="project" value="GO_Central"/>
</dbReference>
<dbReference type="GO" id="GO:0006744">
    <property type="term" value="P:ubiquinone biosynthetic process"/>
    <property type="evidence" value="ECO:0000318"/>
    <property type="project" value="GO_Central"/>
</dbReference>
<dbReference type="CDD" id="cd13959">
    <property type="entry name" value="PT_UbiA_COQ2"/>
    <property type="match status" value="1"/>
</dbReference>
<dbReference type="FunFam" id="1.10.357.140:FF:000002">
    <property type="entry name" value="4-hydroxybenzoate octaprenyltransferase"/>
    <property type="match status" value="1"/>
</dbReference>
<dbReference type="FunFam" id="1.20.120.1780:FF:000001">
    <property type="entry name" value="4-hydroxybenzoate octaprenyltransferase"/>
    <property type="match status" value="1"/>
</dbReference>
<dbReference type="Gene3D" id="1.10.357.140">
    <property type="entry name" value="UbiA prenyltransferase"/>
    <property type="match status" value="1"/>
</dbReference>
<dbReference type="Gene3D" id="1.20.120.1780">
    <property type="entry name" value="UbiA prenyltransferase"/>
    <property type="match status" value="1"/>
</dbReference>
<dbReference type="HAMAP" id="MF_01635">
    <property type="entry name" value="UbiA"/>
    <property type="match status" value="1"/>
</dbReference>
<dbReference type="InterPro" id="IPR006370">
    <property type="entry name" value="HB_polyprenyltransferase-like"/>
</dbReference>
<dbReference type="InterPro" id="IPR039653">
    <property type="entry name" value="Prenyltransferase"/>
</dbReference>
<dbReference type="InterPro" id="IPR000537">
    <property type="entry name" value="UbiA_prenyltransferase"/>
</dbReference>
<dbReference type="InterPro" id="IPR030470">
    <property type="entry name" value="UbiA_prenylTrfase_CS"/>
</dbReference>
<dbReference type="InterPro" id="IPR044878">
    <property type="entry name" value="UbiA_sf"/>
</dbReference>
<dbReference type="NCBIfam" id="TIGR01474">
    <property type="entry name" value="ubiA_proteo"/>
    <property type="match status" value="1"/>
</dbReference>
<dbReference type="PANTHER" id="PTHR11048:SF28">
    <property type="entry name" value="4-HYDROXYBENZOATE POLYPRENYLTRANSFERASE, MITOCHONDRIAL"/>
    <property type="match status" value="1"/>
</dbReference>
<dbReference type="PANTHER" id="PTHR11048">
    <property type="entry name" value="PRENYLTRANSFERASES"/>
    <property type="match status" value="1"/>
</dbReference>
<dbReference type="Pfam" id="PF01040">
    <property type="entry name" value="UbiA"/>
    <property type="match status" value="1"/>
</dbReference>
<dbReference type="PROSITE" id="PS00943">
    <property type="entry name" value="UBIA"/>
    <property type="match status" value="1"/>
</dbReference>
<feature type="chain" id="PRO_0000262836" description="4-hydroxybenzoate octaprenyltransferase">
    <location>
        <begin position="1"/>
        <end position="290"/>
    </location>
</feature>
<feature type="transmembrane region" description="Helical" evidence="1">
    <location>
        <begin position="23"/>
        <end position="43"/>
    </location>
</feature>
<feature type="transmembrane region" description="Helical" evidence="1">
    <location>
        <begin position="46"/>
        <end position="66"/>
    </location>
</feature>
<feature type="transmembrane region" description="Helical" evidence="1">
    <location>
        <begin position="99"/>
        <end position="119"/>
    </location>
</feature>
<feature type="transmembrane region" description="Helical" evidence="1">
    <location>
        <begin position="141"/>
        <end position="161"/>
    </location>
</feature>
<feature type="transmembrane region" description="Helical" evidence="1">
    <location>
        <begin position="163"/>
        <end position="183"/>
    </location>
</feature>
<feature type="transmembrane region" description="Helical" evidence="1">
    <location>
        <begin position="212"/>
        <end position="232"/>
    </location>
</feature>
<feature type="transmembrane region" description="Helical" evidence="1">
    <location>
        <begin position="233"/>
        <end position="253"/>
    </location>
</feature>
<feature type="transmembrane region" description="Helical" evidence="1">
    <location>
        <begin position="268"/>
        <end position="288"/>
    </location>
</feature>
<feature type="mutagenesis site" description="Low level streptomycin, spectinomycin and kanamycin resistance, has small colony phenotype." evidence="2">
    <location>
        <begin position="241"/>
        <end position="290"/>
    </location>
</feature>
<reference key="1">
    <citation type="journal article" date="2001" name="Nature">
        <title>Complete genome sequence of Salmonella enterica serovar Typhimurium LT2.</title>
        <authorList>
            <person name="McClelland M."/>
            <person name="Sanderson K.E."/>
            <person name="Spieth J."/>
            <person name="Clifton S.W."/>
            <person name="Latreille P."/>
            <person name="Courtney L."/>
            <person name="Porwollik S."/>
            <person name="Ali J."/>
            <person name="Dante M."/>
            <person name="Du F."/>
            <person name="Hou S."/>
            <person name="Layman D."/>
            <person name="Leonard S."/>
            <person name="Nguyen C."/>
            <person name="Scott K."/>
            <person name="Holmes A."/>
            <person name="Grewal N."/>
            <person name="Mulvaney E."/>
            <person name="Ryan E."/>
            <person name="Sun H."/>
            <person name="Florea L."/>
            <person name="Miller W."/>
            <person name="Stoneking T."/>
            <person name="Nhan M."/>
            <person name="Waterston R."/>
            <person name="Wilson R.K."/>
        </authorList>
    </citation>
    <scope>NUCLEOTIDE SEQUENCE [LARGE SCALE GENOMIC DNA]</scope>
    <source>
        <strain>LT2 / SGSC1412 / ATCC 700720</strain>
    </source>
</reference>
<reference key="2">
    <citation type="journal article" date="2011" name="Mol. Microbiol.">
        <title>Activation of cryptic aminoglycoside resistance in Salmonella enterica.</title>
        <authorList>
            <person name="Koskiniemi S."/>
            <person name="Praenting M."/>
            <person name="Gullberg E."/>
            <person name="Naesvall J."/>
            <person name="Andersson D.I."/>
        </authorList>
    </citation>
    <scope>MUTAGENESIS OF 241-TRP--PHE-290</scope>
    <source>
        <strain>LT2 / SGSC1412 / ATCC 700720</strain>
    </source>
</reference>